<organism>
    <name type="scientific">Caulobacter sp. (strain K31)</name>
    <dbReference type="NCBI Taxonomy" id="366602"/>
    <lineage>
        <taxon>Bacteria</taxon>
        <taxon>Pseudomonadati</taxon>
        <taxon>Pseudomonadota</taxon>
        <taxon>Alphaproteobacteria</taxon>
        <taxon>Caulobacterales</taxon>
        <taxon>Caulobacteraceae</taxon>
        <taxon>Caulobacter</taxon>
    </lineage>
</organism>
<dbReference type="EC" id="4.2.1.59" evidence="1"/>
<dbReference type="EC" id="5.3.3.14" evidence="1"/>
<dbReference type="EMBL" id="CP000927">
    <property type="protein sequence ID" value="ABZ74180.1"/>
    <property type="molecule type" value="Genomic_DNA"/>
</dbReference>
<dbReference type="SMR" id="B0T7B6"/>
<dbReference type="STRING" id="366602.Caul_5060"/>
<dbReference type="KEGG" id="cak:Caul_5060"/>
<dbReference type="eggNOG" id="COG0764">
    <property type="taxonomic scope" value="Bacteria"/>
</dbReference>
<dbReference type="HOGENOM" id="CLU_097925_0_0_5"/>
<dbReference type="OrthoDB" id="9786735at2"/>
<dbReference type="UniPathway" id="UPA00094"/>
<dbReference type="GO" id="GO:0005737">
    <property type="term" value="C:cytoplasm"/>
    <property type="evidence" value="ECO:0007669"/>
    <property type="project" value="UniProtKB-SubCell"/>
</dbReference>
<dbReference type="GO" id="GO:0019171">
    <property type="term" value="F:(3R)-hydroxyacyl-[acyl-carrier-protein] dehydratase activity"/>
    <property type="evidence" value="ECO:0007669"/>
    <property type="project" value="UniProtKB-UniRule"/>
</dbReference>
<dbReference type="GO" id="GO:0034017">
    <property type="term" value="F:trans-2-decenoyl-acyl-carrier-protein isomerase activity"/>
    <property type="evidence" value="ECO:0007669"/>
    <property type="project" value="UniProtKB-UniRule"/>
</dbReference>
<dbReference type="GO" id="GO:0006636">
    <property type="term" value="P:unsaturated fatty acid biosynthetic process"/>
    <property type="evidence" value="ECO:0007669"/>
    <property type="project" value="UniProtKB-UniRule"/>
</dbReference>
<dbReference type="CDD" id="cd01287">
    <property type="entry name" value="FabA"/>
    <property type="match status" value="1"/>
</dbReference>
<dbReference type="Gene3D" id="3.10.129.10">
    <property type="entry name" value="Hotdog Thioesterase"/>
    <property type="match status" value="1"/>
</dbReference>
<dbReference type="HAMAP" id="MF_00405">
    <property type="entry name" value="FabA"/>
    <property type="match status" value="1"/>
</dbReference>
<dbReference type="InterPro" id="IPR010083">
    <property type="entry name" value="FabA"/>
</dbReference>
<dbReference type="InterPro" id="IPR013114">
    <property type="entry name" value="FabA_FabZ"/>
</dbReference>
<dbReference type="InterPro" id="IPR029069">
    <property type="entry name" value="HotDog_dom_sf"/>
</dbReference>
<dbReference type="NCBIfam" id="TIGR01749">
    <property type="entry name" value="fabA"/>
    <property type="match status" value="1"/>
</dbReference>
<dbReference type="NCBIfam" id="NF003509">
    <property type="entry name" value="PRK05174.1"/>
    <property type="match status" value="1"/>
</dbReference>
<dbReference type="PANTHER" id="PTHR30272">
    <property type="entry name" value="3-HYDROXYACYL-[ACYL-CARRIER-PROTEIN] DEHYDRATASE"/>
    <property type="match status" value="1"/>
</dbReference>
<dbReference type="PANTHER" id="PTHR30272:SF8">
    <property type="entry name" value="3-HYDROXYDECANOYL-[ACYL-CARRIER-PROTEIN] DEHYDRATASE"/>
    <property type="match status" value="1"/>
</dbReference>
<dbReference type="Pfam" id="PF07977">
    <property type="entry name" value="FabA"/>
    <property type="match status" value="1"/>
</dbReference>
<dbReference type="SUPFAM" id="SSF54637">
    <property type="entry name" value="Thioesterase/thiol ester dehydrase-isomerase"/>
    <property type="match status" value="1"/>
</dbReference>
<comment type="function">
    <text evidence="1">Necessary for the introduction of cis unsaturation into fatty acids. Catalyzes the dehydration of (3R)-3-hydroxydecanoyl-ACP to E-(2)-decenoyl-ACP and then its isomerization to Z-(3)-decenoyl-ACP. Can catalyze the dehydratase reaction for beta-hydroxyacyl-ACPs with saturated chain lengths up to 16:0, being most active on intermediate chain length.</text>
</comment>
<comment type="catalytic activity">
    <reaction evidence="1">
        <text>a (3R)-hydroxyacyl-[ACP] = a (2E)-enoyl-[ACP] + H2O</text>
        <dbReference type="Rhea" id="RHEA:13097"/>
        <dbReference type="Rhea" id="RHEA-COMP:9925"/>
        <dbReference type="Rhea" id="RHEA-COMP:9945"/>
        <dbReference type="ChEBI" id="CHEBI:15377"/>
        <dbReference type="ChEBI" id="CHEBI:78784"/>
        <dbReference type="ChEBI" id="CHEBI:78827"/>
        <dbReference type="EC" id="4.2.1.59"/>
    </reaction>
</comment>
<comment type="catalytic activity">
    <reaction evidence="1">
        <text>(3R)-hydroxydecanoyl-[ACP] = (2E)-decenoyl-[ACP] + H2O</text>
        <dbReference type="Rhea" id="RHEA:41860"/>
        <dbReference type="Rhea" id="RHEA-COMP:9638"/>
        <dbReference type="Rhea" id="RHEA-COMP:9639"/>
        <dbReference type="ChEBI" id="CHEBI:15377"/>
        <dbReference type="ChEBI" id="CHEBI:78466"/>
        <dbReference type="ChEBI" id="CHEBI:78467"/>
    </reaction>
</comment>
<comment type="catalytic activity">
    <reaction evidence="1">
        <text>(2E)-decenoyl-[ACP] = (3Z)-decenoyl-[ACP]</text>
        <dbReference type="Rhea" id="RHEA:23568"/>
        <dbReference type="Rhea" id="RHEA-COMP:9639"/>
        <dbReference type="Rhea" id="RHEA-COMP:9927"/>
        <dbReference type="ChEBI" id="CHEBI:78467"/>
        <dbReference type="ChEBI" id="CHEBI:78798"/>
        <dbReference type="EC" id="5.3.3.14"/>
    </reaction>
</comment>
<comment type="pathway">
    <text evidence="1">Lipid metabolism; fatty acid biosynthesis.</text>
</comment>
<comment type="subunit">
    <text evidence="1">Homodimer.</text>
</comment>
<comment type="subcellular location">
    <subcellularLocation>
        <location evidence="1">Cytoplasm</location>
    </subcellularLocation>
</comment>
<comment type="similarity">
    <text evidence="1">Belongs to the thioester dehydratase family. FabA subfamily.</text>
</comment>
<feature type="chain" id="PRO_1000080426" description="3-hydroxydecanoyl-[acyl-carrier-protein] dehydratase">
    <location>
        <begin position="1"/>
        <end position="171"/>
    </location>
</feature>
<feature type="active site" evidence="1">
    <location>
        <position position="69"/>
    </location>
</feature>
<evidence type="ECO:0000255" key="1">
    <source>
        <dbReference type="HAMAP-Rule" id="MF_00405"/>
    </source>
</evidence>
<keyword id="KW-0963">Cytoplasm</keyword>
<keyword id="KW-0275">Fatty acid biosynthesis</keyword>
<keyword id="KW-0276">Fatty acid metabolism</keyword>
<keyword id="KW-0413">Isomerase</keyword>
<keyword id="KW-0444">Lipid biosynthesis</keyword>
<keyword id="KW-0443">Lipid metabolism</keyword>
<keyword id="KW-0456">Lyase</keyword>
<sequence length="171" mass="18722">MQQSSYTFDELLACGRGEMFGPGNAQLPAPPMLMFDRIVRIESDGGKYGKGYVEAEFDINPDLWFFACHFIGDPVMPGCLGLDAMWQLVGFFLGWSGGPGRGRALGVGEVKFTGQVTPDVKRVTYKIDLKRVIMRKLVMGIADGVVEADGKPIYEAKDLKVGLFTAEQMAS</sequence>
<gene>
    <name evidence="1" type="primary">fabA</name>
    <name type="ordered locus">Caul_5060</name>
</gene>
<protein>
    <recommendedName>
        <fullName evidence="1">3-hydroxydecanoyl-[acyl-carrier-protein] dehydratase</fullName>
        <ecNumber evidence="1">4.2.1.59</ecNumber>
    </recommendedName>
    <alternativeName>
        <fullName evidence="1">3-hydroxyacyl-[acyl-carrier-protein] dehydratase FabA</fullName>
    </alternativeName>
    <alternativeName>
        <fullName evidence="1">Beta-hydroxydecanoyl thioester dehydrase</fullName>
    </alternativeName>
    <alternativeName>
        <fullName evidence="1">Trans-2-decenoyl-[acyl-carrier-protein] isomerase</fullName>
        <ecNumber evidence="1">5.3.3.14</ecNumber>
    </alternativeName>
</protein>
<name>FABA_CAUSK</name>
<accession>B0T7B6</accession>
<reference key="1">
    <citation type="submission" date="2008-01" db="EMBL/GenBank/DDBJ databases">
        <title>Complete sequence of chromosome of Caulobacter sp. K31.</title>
        <authorList>
            <consortium name="US DOE Joint Genome Institute"/>
            <person name="Copeland A."/>
            <person name="Lucas S."/>
            <person name="Lapidus A."/>
            <person name="Barry K."/>
            <person name="Glavina del Rio T."/>
            <person name="Dalin E."/>
            <person name="Tice H."/>
            <person name="Pitluck S."/>
            <person name="Bruce D."/>
            <person name="Goodwin L."/>
            <person name="Thompson L.S."/>
            <person name="Brettin T."/>
            <person name="Detter J.C."/>
            <person name="Han C."/>
            <person name="Schmutz J."/>
            <person name="Larimer F."/>
            <person name="Land M."/>
            <person name="Hauser L."/>
            <person name="Kyrpides N."/>
            <person name="Kim E."/>
            <person name="Stephens C."/>
            <person name="Richardson P."/>
        </authorList>
    </citation>
    <scope>NUCLEOTIDE SEQUENCE [LARGE SCALE GENOMIC DNA]</scope>
    <source>
        <strain>K31</strain>
    </source>
</reference>
<proteinExistence type="inferred from homology"/>